<name>TRUB_STAEQ</name>
<sequence>MYNGILPVFKERGLTSHDVVFKLRKILKMKKIGHTGTLDPEVNGVLPICLGDATKVSDYIMEMGKTYHAMITLGKSTTTEDQTGDILETRAVDKNDINEDTIDQVLQQFEGHIQQIPPMYSSVKVNGRKLYEYARNNETVERPKRQVFIKDIHRISEVTFQEQTCHFEVEVTCGKGTYIRTLATDIGLKLGFPAHMSRLTRIASGGFQLESSLTIDQIKELHEHDSLHNELFPIEYGLKGLKSFQVKDSNFKKKICNGQKFHKKVLSQNVKEPFIFVDSSTQKVLAIYIVHPDKPYEIKPKKVFN</sequence>
<gene>
    <name evidence="1" type="primary">truB</name>
    <name type="ordered locus">SERP0838</name>
</gene>
<protein>
    <recommendedName>
        <fullName evidence="1">tRNA pseudouridine synthase B</fullName>
        <ecNumber evidence="1">5.4.99.25</ecNumber>
    </recommendedName>
    <alternativeName>
        <fullName evidence="1">tRNA pseudouridine(55) synthase</fullName>
        <shortName evidence="1">Psi55 synthase</shortName>
    </alternativeName>
    <alternativeName>
        <fullName evidence="1">tRNA pseudouridylate synthase</fullName>
    </alternativeName>
    <alternativeName>
        <fullName evidence="1">tRNA-uridine isomerase</fullName>
    </alternativeName>
</protein>
<organism>
    <name type="scientific">Staphylococcus epidermidis (strain ATCC 35984 / DSM 28319 / BCRC 17069 / CCUG 31568 / BM 3577 / RP62A)</name>
    <dbReference type="NCBI Taxonomy" id="176279"/>
    <lineage>
        <taxon>Bacteria</taxon>
        <taxon>Bacillati</taxon>
        <taxon>Bacillota</taxon>
        <taxon>Bacilli</taxon>
        <taxon>Bacillales</taxon>
        <taxon>Staphylococcaceae</taxon>
        <taxon>Staphylococcus</taxon>
    </lineage>
</organism>
<accession>Q5HPS0</accession>
<feature type="chain" id="PRO_0000121909" description="tRNA pseudouridine synthase B">
    <location>
        <begin position="1"/>
        <end position="305"/>
    </location>
</feature>
<feature type="active site" description="Nucleophile" evidence="1">
    <location>
        <position position="39"/>
    </location>
</feature>
<keyword id="KW-0413">Isomerase</keyword>
<keyword id="KW-1185">Reference proteome</keyword>
<keyword id="KW-0819">tRNA processing</keyword>
<comment type="function">
    <text evidence="1">Responsible for synthesis of pseudouridine from uracil-55 in the psi GC loop of transfer RNAs.</text>
</comment>
<comment type="catalytic activity">
    <reaction evidence="1">
        <text>uridine(55) in tRNA = pseudouridine(55) in tRNA</text>
        <dbReference type="Rhea" id="RHEA:42532"/>
        <dbReference type="Rhea" id="RHEA-COMP:10101"/>
        <dbReference type="Rhea" id="RHEA-COMP:10102"/>
        <dbReference type="ChEBI" id="CHEBI:65314"/>
        <dbReference type="ChEBI" id="CHEBI:65315"/>
        <dbReference type="EC" id="5.4.99.25"/>
    </reaction>
</comment>
<comment type="similarity">
    <text evidence="1">Belongs to the pseudouridine synthase TruB family. Type 1 subfamily.</text>
</comment>
<evidence type="ECO:0000255" key="1">
    <source>
        <dbReference type="HAMAP-Rule" id="MF_01080"/>
    </source>
</evidence>
<dbReference type="EC" id="5.4.99.25" evidence="1"/>
<dbReference type="EMBL" id="CP000029">
    <property type="protein sequence ID" value="AAW54207.1"/>
    <property type="molecule type" value="Genomic_DNA"/>
</dbReference>
<dbReference type="RefSeq" id="WP_002439525.1">
    <property type="nucleotide sequence ID" value="NC_002976.3"/>
</dbReference>
<dbReference type="SMR" id="Q5HPS0"/>
<dbReference type="STRING" id="176279.SERP0838"/>
<dbReference type="KEGG" id="ser:SERP0838"/>
<dbReference type="eggNOG" id="COG0130">
    <property type="taxonomic scope" value="Bacteria"/>
</dbReference>
<dbReference type="HOGENOM" id="CLU_032087_0_1_9"/>
<dbReference type="Proteomes" id="UP000000531">
    <property type="component" value="Chromosome"/>
</dbReference>
<dbReference type="GO" id="GO:0003723">
    <property type="term" value="F:RNA binding"/>
    <property type="evidence" value="ECO:0007669"/>
    <property type="project" value="InterPro"/>
</dbReference>
<dbReference type="GO" id="GO:0160148">
    <property type="term" value="F:tRNA pseudouridine(55) synthase activity"/>
    <property type="evidence" value="ECO:0007669"/>
    <property type="project" value="UniProtKB-EC"/>
</dbReference>
<dbReference type="GO" id="GO:1990481">
    <property type="term" value="P:mRNA pseudouridine synthesis"/>
    <property type="evidence" value="ECO:0007669"/>
    <property type="project" value="TreeGrafter"/>
</dbReference>
<dbReference type="GO" id="GO:0031119">
    <property type="term" value="P:tRNA pseudouridine synthesis"/>
    <property type="evidence" value="ECO:0007669"/>
    <property type="project" value="UniProtKB-UniRule"/>
</dbReference>
<dbReference type="CDD" id="cd02573">
    <property type="entry name" value="PseudoU_synth_EcTruB"/>
    <property type="match status" value="1"/>
</dbReference>
<dbReference type="FunFam" id="3.30.2350.10:FF:000011">
    <property type="entry name" value="tRNA pseudouridine synthase B"/>
    <property type="match status" value="1"/>
</dbReference>
<dbReference type="Gene3D" id="3.30.2350.10">
    <property type="entry name" value="Pseudouridine synthase"/>
    <property type="match status" value="1"/>
</dbReference>
<dbReference type="HAMAP" id="MF_01080">
    <property type="entry name" value="TruB_bact"/>
    <property type="match status" value="1"/>
</dbReference>
<dbReference type="InterPro" id="IPR020103">
    <property type="entry name" value="PsdUridine_synth_cat_dom_sf"/>
</dbReference>
<dbReference type="InterPro" id="IPR002501">
    <property type="entry name" value="PsdUridine_synth_N"/>
</dbReference>
<dbReference type="InterPro" id="IPR014780">
    <property type="entry name" value="tRNA_psdUridine_synth_TruB"/>
</dbReference>
<dbReference type="InterPro" id="IPR032819">
    <property type="entry name" value="TruB_C"/>
</dbReference>
<dbReference type="NCBIfam" id="TIGR00431">
    <property type="entry name" value="TruB"/>
    <property type="match status" value="1"/>
</dbReference>
<dbReference type="PANTHER" id="PTHR13767:SF2">
    <property type="entry name" value="PSEUDOURIDYLATE SYNTHASE TRUB1"/>
    <property type="match status" value="1"/>
</dbReference>
<dbReference type="PANTHER" id="PTHR13767">
    <property type="entry name" value="TRNA-PSEUDOURIDINE SYNTHASE"/>
    <property type="match status" value="1"/>
</dbReference>
<dbReference type="Pfam" id="PF16198">
    <property type="entry name" value="TruB_C_2"/>
    <property type="match status" value="1"/>
</dbReference>
<dbReference type="Pfam" id="PF01509">
    <property type="entry name" value="TruB_N"/>
    <property type="match status" value="1"/>
</dbReference>
<dbReference type="SUPFAM" id="SSF55120">
    <property type="entry name" value="Pseudouridine synthase"/>
    <property type="match status" value="1"/>
</dbReference>
<proteinExistence type="inferred from homology"/>
<reference key="1">
    <citation type="journal article" date="2005" name="J. Bacteriol.">
        <title>Insights on evolution of virulence and resistance from the complete genome analysis of an early methicillin-resistant Staphylococcus aureus strain and a biofilm-producing methicillin-resistant Staphylococcus epidermidis strain.</title>
        <authorList>
            <person name="Gill S.R."/>
            <person name="Fouts D.E."/>
            <person name="Archer G.L."/>
            <person name="Mongodin E.F."/>
            <person name="DeBoy R.T."/>
            <person name="Ravel J."/>
            <person name="Paulsen I.T."/>
            <person name="Kolonay J.F."/>
            <person name="Brinkac L.M."/>
            <person name="Beanan M.J."/>
            <person name="Dodson R.J."/>
            <person name="Daugherty S.C."/>
            <person name="Madupu R."/>
            <person name="Angiuoli S.V."/>
            <person name="Durkin A.S."/>
            <person name="Haft D.H."/>
            <person name="Vamathevan J.J."/>
            <person name="Khouri H."/>
            <person name="Utterback T.R."/>
            <person name="Lee C."/>
            <person name="Dimitrov G."/>
            <person name="Jiang L."/>
            <person name="Qin H."/>
            <person name="Weidman J."/>
            <person name="Tran K."/>
            <person name="Kang K.H."/>
            <person name="Hance I.R."/>
            <person name="Nelson K.E."/>
            <person name="Fraser C.M."/>
        </authorList>
    </citation>
    <scope>NUCLEOTIDE SEQUENCE [LARGE SCALE GENOMIC DNA]</scope>
    <source>
        <strain>ATCC 35984 / DSM 28319 / BCRC 17069 / CCUG 31568 / BM 3577 / RP62A</strain>
    </source>
</reference>